<feature type="chain" id="PRO_0000152495" description="tRNA pseudouridine synthase D">
    <location>
        <begin position="1"/>
        <end position="349"/>
    </location>
</feature>
<feature type="domain" description="TRUD">
    <location>
        <begin position="155"/>
        <end position="303"/>
    </location>
</feature>
<feature type="region of interest" description="RNA binding" evidence="5">
    <location>
        <begin position="180"/>
        <end position="187"/>
    </location>
</feature>
<feature type="active site" description="Proton acceptor" evidence="2">
    <location>
        <position position="31"/>
    </location>
</feature>
<feature type="active site" description="Nucleophile" evidence="4">
    <location>
        <position position="80"/>
    </location>
</feature>
<feature type="binding site" evidence="1">
    <location>
        <position position="27"/>
    </location>
    <ligand>
        <name>substrate</name>
    </ligand>
</feature>
<feature type="binding site" evidence="5">
    <location>
        <position position="129"/>
    </location>
    <ligand>
        <name>substrate</name>
    </ligand>
</feature>
<feature type="binding site" evidence="1">
    <location>
        <position position="329"/>
    </location>
    <ligand>
        <name>substrate</name>
    </ligand>
</feature>
<feature type="mutagenesis site" description="3-fold decrease in activity." evidence="4">
    <original>E</original>
    <variation>D</variation>
    <location>
        <position position="31"/>
    </location>
</feature>
<feature type="mutagenesis site" description="Loss of activity." evidence="4">
    <original>E</original>
    <variation>Q</variation>
    <location>
        <position position="31"/>
    </location>
</feature>
<feature type="mutagenesis site" description="20-fold decrease in activity." evidence="4">
    <original>K</original>
    <variation>L</variation>
    <location>
        <position position="79"/>
    </location>
</feature>
<feature type="mutagenesis site" description="10-fold decrease in activity." evidence="4">
    <original>K</original>
    <variation>R</variation>
    <location>
        <position position="79"/>
    </location>
</feature>
<feature type="mutagenesis site" description="Loss of activity." evidence="3">
    <original>D</original>
    <variation>N</variation>
    <variation>T</variation>
    <location>
        <position position="80"/>
    </location>
</feature>
<feature type="mutagenesis site" description="3-fold decrease in activity." evidence="4">
    <original>Q</original>
    <variation>E</variation>
    <location>
        <position position="87"/>
    </location>
</feature>
<feature type="mutagenesis site" description="Loss of activity." evidence="4">
    <original>N</original>
    <variation>K</variation>
    <location>
        <position position="129"/>
    </location>
</feature>
<feature type="mutagenesis site" description="1.5-fold decrease in activity." evidence="4">
    <original>F</original>
    <variation>Y</variation>
    <location>
        <position position="131"/>
    </location>
</feature>
<feature type="helix" evidence="7">
    <location>
        <begin position="4"/>
        <end position="6"/>
    </location>
</feature>
<feature type="strand" evidence="7">
    <location>
        <begin position="15"/>
        <end position="17"/>
    </location>
</feature>
<feature type="strand" evidence="7">
    <location>
        <begin position="19"/>
        <end position="23"/>
    </location>
</feature>
<feature type="helix" evidence="7">
    <location>
        <begin position="24"/>
        <end position="26"/>
    </location>
</feature>
<feature type="strand" evidence="7">
    <location>
        <begin position="27"/>
        <end position="32"/>
    </location>
</feature>
<feature type="strand" evidence="7">
    <location>
        <begin position="41"/>
        <end position="53"/>
    </location>
</feature>
<feature type="helix" evidence="7">
    <location>
        <begin position="55"/>
        <end position="65"/>
    </location>
</feature>
<feature type="helix" evidence="7">
    <location>
        <begin position="70"/>
        <end position="72"/>
    </location>
</feature>
<feature type="strand" evidence="7">
    <location>
        <begin position="73"/>
        <end position="76"/>
    </location>
</feature>
<feature type="strand" evidence="7">
    <location>
        <begin position="83"/>
        <end position="92"/>
    </location>
</feature>
<feature type="helix" evidence="7">
    <location>
        <begin position="101"/>
        <end position="103"/>
    </location>
</feature>
<feature type="strand" evidence="7">
    <location>
        <begin position="109"/>
        <end position="119"/>
    </location>
</feature>
<feature type="strand" evidence="7">
    <location>
        <begin position="128"/>
        <end position="137"/>
    </location>
</feature>
<feature type="helix" evidence="7">
    <location>
        <begin position="141"/>
        <end position="154"/>
    </location>
</feature>
<feature type="helix" evidence="7">
    <location>
        <begin position="162"/>
        <end position="165"/>
    </location>
</feature>
<feature type="helix" evidence="7">
    <location>
        <begin position="167"/>
        <end position="169"/>
    </location>
</feature>
<feature type="helix" evidence="7">
    <location>
        <begin position="170"/>
        <end position="179"/>
    </location>
</feature>
<feature type="helix" evidence="7">
    <location>
        <begin position="189"/>
        <end position="210"/>
    </location>
</feature>
<feature type="strand" evidence="7">
    <location>
        <begin position="213"/>
        <end position="215"/>
    </location>
</feature>
<feature type="strand" evidence="7">
    <location>
        <begin position="224"/>
        <end position="227"/>
    </location>
</feature>
<feature type="strand" evidence="7">
    <location>
        <begin position="233"/>
        <end position="235"/>
    </location>
</feature>
<feature type="helix" evidence="7">
    <location>
        <begin position="238"/>
        <end position="240"/>
    </location>
</feature>
<feature type="helix" evidence="7">
    <location>
        <begin position="241"/>
        <end position="249"/>
    </location>
</feature>
<feature type="strand" evidence="7">
    <location>
        <begin position="252"/>
        <end position="259"/>
    </location>
</feature>
<feature type="helix" evidence="7">
    <location>
        <begin position="269"/>
        <end position="278"/>
    </location>
</feature>
<feature type="turn" evidence="7">
    <location>
        <begin position="279"/>
        <end position="281"/>
    </location>
</feature>
<feature type="helix" evidence="7">
    <location>
        <begin position="283"/>
        <end position="291"/>
    </location>
</feature>
<feature type="strand" evidence="7">
    <location>
        <begin position="297"/>
        <end position="303"/>
    </location>
</feature>
<feature type="strand" evidence="7">
    <location>
        <begin position="306"/>
        <end position="314"/>
    </location>
</feature>
<feature type="strand" evidence="7">
    <location>
        <begin position="317"/>
        <end position="325"/>
    </location>
</feature>
<feature type="helix" evidence="7">
    <location>
        <begin position="330"/>
        <end position="334"/>
    </location>
</feature>
<feature type="turn" evidence="7">
    <location>
        <begin position="335"/>
        <end position="337"/>
    </location>
</feature>
<keyword id="KW-0002">3D-structure</keyword>
<keyword id="KW-0903">Direct protein sequencing</keyword>
<keyword id="KW-0413">Isomerase</keyword>
<keyword id="KW-1185">Reference proteome</keyword>
<keyword id="KW-0819">tRNA processing</keyword>
<proteinExistence type="evidence at protein level"/>
<accession>Q57261</accession>
<accession>Q2MA84</accession>
<reference key="1">
    <citation type="journal article" date="1994" name="J. Bacteriol.">
        <title>A new gene involved in stationary-phase survival located at 59 minutes on the Escherichia coli chromosome.</title>
        <authorList>
            <person name="Li C."/>
            <person name="Ichikawa J.K."/>
            <person name="Ravetto J.J."/>
            <person name="Kuo H.-C."/>
            <person name="Fu J.C."/>
            <person name="Clarke S."/>
        </authorList>
    </citation>
    <scope>NUCLEOTIDE SEQUENCE [GENOMIC DNA]</scope>
    <source>
        <strain>MP180</strain>
    </source>
</reference>
<reference key="2">
    <citation type="journal article" date="1997" name="Science">
        <title>The complete genome sequence of Escherichia coli K-12.</title>
        <authorList>
            <person name="Blattner F.R."/>
            <person name="Plunkett G. III"/>
            <person name="Bloch C.A."/>
            <person name="Perna N.T."/>
            <person name="Burland V."/>
            <person name="Riley M."/>
            <person name="Collado-Vides J."/>
            <person name="Glasner J.D."/>
            <person name="Rode C.K."/>
            <person name="Mayhew G.F."/>
            <person name="Gregor J."/>
            <person name="Davis N.W."/>
            <person name="Kirkpatrick H.A."/>
            <person name="Goeden M.A."/>
            <person name="Rose D.J."/>
            <person name="Mau B."/>
            <person name="Shao Y."/>
        </authorList>
    </citation>
    <scope>NUCLEOTIDE SEQUENCE [LARGE SCALE GENOMIC DNA]</scope>
    <source>
        <strain>K12 / MG1655 / ATCC 47076</strain>
    </source>
</reference>
<reference key="3">
    <citation type="journal article" date="2006" name="Mol. Syst. Biol.">
        <title>Highly accurate genome sequences of Escherichia coli K-12 strains MG1655 and W3110.</title>
        <authorList>
            <person name="Hayashi K."/>
            <person name="Morooka N."/>
            <person name="Yamamoto Y."/>
            <person name="Fujita K."/>
            <person name="Isono K."/>
            <person name="Choi S."/>
            <person name="Ohtsubo E."/>
            <person name="Baba T."/>
            <person name="Wanner B.L."/>
            <person name="Mori H."/>
            <person name="Horiuchi T."/>
        </authorList>
    </citation>
    <scope>NUCLEOTIDE SEQUENCE [LARGE SCALE GENOMIC DNA]</scope>
    <source>
        <strain>K12 / W3110 / ATCC 27325 / DSM 5911</strain>
    </source>
</reference>
<reference key="4">
    <citation type="journal article" date="2003" name="RNA">
        <title>A novel unanticipated type of pseudouridine synthase with homologs in bacteria, archaea, and eukarya.</title>
        <authorList>
            <person name="Kaya Y."/>
            <person name="Ofengand J."/>
        </authorList>
    </citation>
    <scope>PROTEIN SEQUENCE OF 1-10</scope>
    <scope>FUNCTION</scope>
    <scope>CATALYTIC ACTIVITY</scope>
    <scope>SUBSTRATE SPECIFICITY</scope>
    <scope>MUTAGENESIS OF ASP-80</scope>
    <source>
        <strain>K12 / MG1655 / ATCC 47076</strain>
    </source>
</reference>
<reference key="5">
    <citation type="journal article" date="1999" name="Electrophoresis">
        <title>Enrichment of low abundance proteins of Escherichia coli by hydroxyapatite chromatography.</title>
        <authorList>
            <person name="Fountoulakis M."/>
            <person name="Takacs M.-F."/>
            <person name="Berndt P."/>
            <person name="Langen H."/>
            <person name="Takacs B."/>
        </authorList>
    </citation>
    <scope>IDENTIFICATION BY MASS SPECTROMETRY</scope>
    <source>
        <strain>B / BL21</strain>
    </source>
</reference>
<reference key="6">
    <citation type="journal article" date="2004" name="Acta Crystallogr. D">
        <title>Expression, purification, crystallization and preliminary diffraction studies of the tRNA pseudouridine synthase TruD from Escherichia coli.</title>
        <authorList>
            <person name="Ericsson U.B."/>
            <person name="Andersson M.E."/>
            <person name="Engvall B."/>
            <person name="Nordlund P."/>
            <person name="Hallberg B.M."/>
        </authorList>
    </citation>
    <scope>CRYSTALLIZATION</scope>
    <scope>SUBUNIT</scope>
    <source>
        <strain>K12</strain>
    </source>
</reference>
<reference key="7">
    <citation type="journal article" date="2009" name="Arch. Biochem. Biophys.">
        <title>Enzymatic characterization and mutational studies of TruD--the fifth family of pseudouridine synthases.</title>
        <authorList>
            <person name="Chan C.M."/>
            <person name="Huang R.H."/>
        </authorList>
    </citation>
    <scope>CATALYTIC ACTIVITY</scope>
    <scope>MUTAGENESIS OF GLU-31; LYS-79; GLN-87; ASN-129 AND PHE-131</scope>
    <scope>PROPOSED REACTION MECHANISM</scope>
    <scope>ACTIVE SITE</scope>
</reference>
<reference key="8">
    <citation type="journal article" date="2004" name="FEBS Lett.">
        <title>X-ray structure of tRNA pseudouridine synthase TruD reveals an inserted domain with a novel fold.</title>
        <authorList>
            <person name="Ericsson U.B."/>
            <person name="Nordlund P."/>
            <person name="Hallberg B.M."/>
        </authorList>
    </citation>
    <scope>X-RAY CRYSTALLOGRAPHY (2.0 ANGSTROMS)</scope>
</reference>
<reference key="9">
    <citation type="journal article" date="2004" name="J. Biol. Chem.">
        <title>Crystal structure of TruD, a novel pseudouridine synthase with a new protein fold.</title>
        <authorList>
            <person name="Kaya Y."/>
            <person name="Del Campo M."/>
            <person name="Ofengand J."/>
            <person name="Malhotra A."/>
        </authorList>
    </citation>
    <scope>X-RAY CRYSTALLOGRAPHY (2.2 ANGSTROMS)</scope>
</reference>
<reference key="10">
    <citation type="journal article" date="2004" name="RNA">
        <title>Crystal structure of the highly divergent pseudouridine synthase TruD reveals a circular permutation of a conserved fold.</title>
        <authorList>
            <person name="Hoang C."/>
            <person name="Ferre-D'Amare A.R."/>
        </authorList>
    </citation>
    <scope>X-RAY CRYSTALLOGRAPHY (2.2 ANGSTROMS)</scope>
</reference>
<evidence type="ECO:0000250" key="1"/>
<evidence type="ECO:0000255" key="2"/>
<evidence type="ECO:0000269" key="3">
    <source>
    </source>
</evidence>
<evidence type="ECO:0000269" key="4">
    <source>
    </source>
</evidence>
<evidence type="ECO:0000305" key="5"/>
<evidence type="ECO:0000305" key="6">
    <source>
    </source>
</evidence>
<evidence type="ECO:0007829" key="7">
    <source>
        <dbReference type="PDB" id="1SZW"/>
    </source>
</evidence>
<gene>
    <name type="primary">truD</name>
    <name type="synonym">ygbO</name>
    <name type="ordered locus">b2745</name>
    <name type="ordered locus">JW2715</name>
</gene>
<dbReference type="EC" id="5.4.99.27"/>
<dbReference type="EMBL" id="L07942">
    <property type="protein sequence ID" value="AAA79838.1"/>
    <property type="molecule type" value="Genomic_DNA"/>
</dbReference>
<dbReference type="EMBL" id="U29579">
    <property type="protein sequence ID" value="AAA69255.1"/>
    <property type="molecule type" value="Genomic_DNA"/>
</dbReference>
<dbReference type="EMBL" id="U00096">
    <property type="protein sequence ID" value="AAC75787.1"/>
    <property type="molecule type" value="Genomic_DNA"/>
</dbReference>
<dbReference type="EMBL" id="AP009048">
    <property type="protein sequence ID" value="BAE76822.1"/>
    <property type="molecule type" value="Genomic_DNA"/>
</dbReference>
<dbReference type="PIR" id="I69731">
    <property type="entry name" value="I69731"/>
</dbReference>
<dbReference type="RefSeq" id="NP_417225.1">
    <property type="nucleotide sequence ID" value="NC_000913.3"/>
</dbReference>
<dbReference type="RefSeq" id="WP_000568943.1">
    <property type="nucleotide sequence ID" value="NZ_STEB01000027.1"/>
</dbReference>
<dbReference type="PDB" id="1SB7">
    <property type="method" value="X-ray"/>
    <property type="resolution" value="2.20 A"/>
    <property type="chains" value="A/B=1-349"/>
</dbReference>
<dbReference type="PDB" id="1SI7">
    <property type="method" value="X-ray"/>
    <property type="resolution" value="2.20 A"/>
    <property type="chains" value="A=1-349"/>
</dbReference>
<dbReference type="PDB" id="1SZW">
    <property type="method" value="X-ray"/>
    <property type="resolution" value="2.00 A"/>
    <property type="chains" value="A/B=1-349"/>
</dbReference>
<dbReference type="PDBsum" id="1SB7"/>
<dbReference type="PDBsum" id="1SI7"/>
<dbReference type="PDBsum" id="1SZW"/>
<dbReference type="SMR" id="Q57261"/>
<dbReference type="BioGRID" id="4262278">
    <property type="interactions" value="49"/>
</dbReference>
<dbReference type="BioGRID" id="851546">
    <property type="interactions" value="2"/>
</dbReference>
<dbReference type="FunCoup" id="Q57261">
    <property type="interactions" value="84"/>
</dbReference>
<dbReference type="IntAct" id="Q57261">
    <property type="interactions" value="9"/>
</dbReference>
<dbReference type="STRING" id="511145.b2745"/>
<dbReference type="jPOST" id="Q57261"/>
<dbReference type="PaxDb" id="511145-b2745"/>
<dbReference type="EnsemblBacteria" id="AAC75787">
    <property type="protein sequence ID" value="AAC75787"/>
    <property type="gene ID" value="b2745"/>
</dbReference>
<dbReference type="GeneID" id="75205606"/>
<dbReference type="GeneID" id="947214"/>
<dbReference type="KEGG" id="ecj:JW2715"/>
<dbReference type="KEGG" id="eco:b2745"/>
<dbReference type="KEGG" id="ecoc:C3026_15095"/>
<dbReference type="PATRIC" id="fig|1411691.4.peg.3995"/>
<dbReference type="EchoBASE" id="EB2912"/>
<dbReference type="eggNOG" id="COG0585">
    <property type="taxonomic scope" value="Bacteria"/>
</dbReference>
<dbReference type="HOGENOM" id="CLU_005281_4_0_6"/>
<dbReference type="InParanoid" id="Q57261"/>
<dbReference type="OMA" id="LWLWVEK"/>
<dbReference type="OrthoDB" id="1550679at2"/>
<dbReference type="PhylomeDB" id="Q57261"/>
<dbReference type="BioCyc" id="EcoCyc:G7422-MONOMER"/>
<dbReference type="BioCyc" id="MetaCyc:G7422-MONOMER"/>
<dbReference type="BRENDA" id="5.4.99.27">
    <property type="organism ID" value="2026"/>
</dbReference>
<dbReference type="EvolutionaryTrace" id="Q57261"/>
<dbReference type="PRO" id="PR:Q57261"/>
<dbReference type="Proteomes" id="UP000000625">
    <property type="component" value="Chromosome"/>
</dbReference>
<dbReference type="GO" id="GO:0005829">
    <property type="term" value="C:cytosol"/>
    <property type="evidence" value="ECO:0000314"/>
    <property type="project" value="EcoCyc"/>
</dbReference>
<dbReference type="GO" id="GO:0009982">
    <property type="term" value="F:pseudouridine synthase activity"/>
    <property type="evidence" value="ECO:0000318"/>
    <property type="project" value="GO_Central"/>
</dbReference>
<dbReference type="GO" id="GO:0003723">
    <property type="term" value="F:RNA binding"/>
    <property type="evidence" value="ECO:0007669"/>
    <property type="project" value="InterPro"/>
</dbReference>
<dbReference type="GO" id="GO:0106029">
    <property type="term" value="F:tRNA pseudouridine synthase activity"/>
    <property type="evidence" value="ECO:0000314"/>
    <property type="project" value="EcoCyc"/>
</dbReference>
<dbReference type="GO" id="GO:0160150">
    <property type="term" value="F:tRNA pseudouridine(13) synthase activity"/>
    <property type="evidence" value="ECO:0007669"/>
    <property type="project" value="UniProtKB-EC"/>
</dbReference>
<dbReference type="GO" id="GO:0001522">
    <property type="term" value="P:pseudouridine synthesis"/>
    <property type="evidence" value="ECO:0000314"/>
    <property type="project" value="EcoCyc"/>
</dbReference>
<dbReference type="GO" id="GO:0031119">
    <property type="term" value="P:tRNA pseudouridine synthesis"/>
    <property type="evidence" value="ECO:0000315"/>
    <property type="project" value="EcoCyc"/>
</dbReference>
<dbReference type="CDD" id="cd02575">
    <property type="entry name" value="PseudoU_synth_EcTruD"/>
    <property type="match status" value="1"/>
</dbReference>
<dbReference type="FunFam" id="3.30.2340.10:FF:000001">
    <property type="entry name" value="tRNA pseudouridine synthase D"/>
    <property type="match status" value="1"/>
</dbReference>
<dbReference type="FunFam" id="3.30.2350.20:FF:000001">
    <property type="entry name" value="tRNA pseudouridine synthase D"/>
    <property type="match status" value="1"/>
</dbReference>
<dbReference type="Gene3D" id="3.30.2350.20">
    <property type="entry name" value="TruD, catalytic domain"/>
    <property type="match status" value="1"/>
</dbReference>
<dbReference type="Gene3D" id="3.30.2340.10">
    <property type="entry name" value="TruD, insertion domain"/>
    <property type="match status" value="1"/>
</dbReference>
<dbReference type="HAMAP" id="MF_01082">
    <property type="entry name" value="TruD"/>
    <property type="match status" value="1"/>
</dbReference>
<dbReference type="InterPro" id="IPR020103">
    <property type="entry name" value="PsdUridine_synth_cat_dom_sf"/>
</dbReference>
<dbReference type="InterPro" id="IPR001656">
    <property type="entry name" value="PsdUridine_synth_TruD"/>
</dbReference>
<dbReference type="InterPro" id="IPR020119">
    <property type="entry name" value="PsdUridine_synth_TruD_CS"/>
</dbReference>
<dbReference type="InterPro" id="IPR011760">
    <property type="entry name" value="PsdUridine_synth_TruD_insert"/>
</dbReference>
<dbReference type="InterPro" id="IPR042214">
    <property type="entry name" value="TruD_catalytic"/>
</dbReference>
<dbReference type="InterPro" id="IPR043165">
    <property type="entry name" value="TruD_insert_sf"/>
</dbReference>
<dbReference type="InterPro" id="IPR050170">
    <property type="entry name" value="TruD_pseudoU_synthase"/>
</dbReference>
<dbReference type="NCBIfam" id="NF002155">
    <property type="entry name" value="PRK00984.1-4"/>
    <property type="match status" value="1"/>
</dbReference>
<dbReference type="NCBIfam" id="TIGR00094">
    <property type="entry name" value="tRNA_TruD_broad"/>
    <property type="match status" value="1"/>
</dbReference>
<dbReference type="PANTHER" id="PTHR47811">
    <property type="entry name" value="TRNA PSEUDOURIDINE SYNTHASE D"/>
    <property type="match status" value="1"/>
</dbReference>
<dbReference type="PANTHER" id="PTHR47811:SF1">
    <property type="entry name" value="TRNA PSEUDOURIDINE SYNTHASE D"/>
    <property type="match status" value="1"/>
</dbReference>
<dbReference type="Pfam" id="PF01142">
    <property type="entry name" value="TruD"/>
    <property type="match status" value="2"/>
</dbReference>
<dbReference type="SUPFAM" id="SSF55120">
    <property type="entry name" value="Pseudouridine synthase"/>
    <property type="match status" value="1"/>
</dbReference>
<dbReference type="PROSITE" id="PS50984">
    <property type="entry name" value="TRUD"/>
    <property type="match status" value="1"/>
</dbReference>
<dbReference type="PROSITE" id="PS01268">
    <property type="entry name" value="UPF0024"/>
    <property type="match status" value="1"/>
</dbReference>
<sequence length="349" mass="39091">MIEFDNLTYLHGKPQGTGLLKANPEDFVVVEDLGFEPDGEGEHILVRILKNGCNTRFVADALAKFLKIHAREVSFAGQKDKHAVTEQWLCARVPGKEMPDLSAFQLEGCQVLEYARHKRKLRLGALKGNAFTLVLREVSNRDDVEQRLIDICVKGVPNYFGAQRFGIGGSNLQGAQRWAQTNTPVRDRNKRSFWLSAARSALFNQIVAERLKKADVNQVVDGDALQLAGRGSWFVATTEELAELQRRVNDKELMITAALPGSGEWGTQREALAFEQAAVAAETELQALLVREKVEAARRAMLLYPQQLSWNWWDDVTVEIRFWLPAGSFATSVVRELINTTGDYAHIAE</sequence>
<protein>
    <recommendedName>
        <fullName>tRNA pseudouridine synthase D</fullName>
        <ecNumber>5.4.99.27</ecNumber>
    </recommendedName>
    <alternativeName>
        <fullName>tRNA pseudouridine(13) synthase</fullName>
    </alternativeName>
    <alternativeName>
        <fullName>tRNA pseudouridylate synthase D</fullName>
    </alternativeName>
    <alternativeName>
        <fullName>tRNA-uridine isomerase D</fullName>
    </alternativeName>
</protein>
<organism>
    <name type="scientific">Escherichia coli (strain K12)</name>
    <dbReference type="NCBI Taxonomy" id="83333"/>
    <lineage>
        <taxon>Bacteria</taxon>
        <taxon>Pseudomonadati</taxon>
        <taxon>Pseudomonadota</taxon>
        <taxon>Gammaproteobacteria</taxon>
        <taxon>Enterobacterales</taxon>
        <taxon>Enterobacteriaceae</taxon>
        <taxon>Escherichia</taxon>
    </lineage>
</organism>
<comment type="function">
    <text evidence="3">Responsible for synthesis of pseudouridine from uracil-13 in transfer RNAs.</text>
</comment>
<comment type="catalytic activity">
    <reaction evidence="3 4">
        <text>uridine(13) in tRNA = pseudouridine(13) in tRNA</text>
        <dbReference type="Rhea" id="RHEA:42540"/>
        <dbReference type="Rhea" id="RHEA-COMP:10105"/>
        <dbReference type="Rhea" id="RHEA-COMP:10106"/>
        <dbReference type="ChEBI" id="CHEBI:65314"/>
        <dbReference type="ChEBI" id="CHEBI:65315"/>
        <dbReference type="EC" id="5.4.99.27"/>
    </reaction>
</comment>
<comment type="subunit">
    <text evidence="6">Monomer.</text>
</comment>
<comment type="similarity">
    <text evidence="5">Belongs to the pseudouridine synthase TruD family.</text>
</comment>
<name>TRUD_ECOLI</name>